<feature type="chain" id="PRO_0000380066" description="GTP-dependent dephospho-CoA kinase">
    <location>
        <begin position="1"/>
        <end position="160"/>
    </location>
</feature>
<feature type="binding site" evidence="1">
    <location>
        <position position="45"/>
    </location>
    <ligand>
        <name>GTP</name>
        <dbReference type="ChEBI" id="CHEBI:37565"/>
    </ligand>
</feature>
<feature type="binding site" evidence="1">
    <location>
        <position position="46"/>
    </location>
    <ligand>
        <name>GTP</name>
        <dbReference type="ChEBI" id="CHEBI:37565"/>
    </ligand>
</feature>
<feature type="binding site" evidence="1">
    <location>
        <position position="47"/>
    </location>
    <ligand>
        <name>GTP</name>
        <dbReference type="ChEBI" id="CHEBI:37565"/>
    </ligand>
</feature>
<feature type="binding site" evidence="1">
    <location>
        <position position="59"/>
    </location>
    <ligand>
        <name>GTP</name>
        <dbReference type="ChEBI" id="CHEBI:37565"/>
    </ligand>
</feature>
<feature type="binding site" evidence="1">
    <location>
        <position position="61"/>
    </location>
    <ligand>
        <name>GTP</name>
        <dbReference type="ChEBI" id="CHEBI:37565"/>
    </ligand>
</feature>
<feature type="binding site" evidence="1">
    <location>
        <position position="108"/>
    </location>
    <ligand>
        <name>GTP</name>
        <dbReference type="ChEBI" id="CHEBI:37565"/>
    </ligand>
</feature>
<feature type="binding site" evidence="1">
    <location>
        <position position="130"/>
    </location>
    <ligand>
        <name>GTP</name>
        <dbReference type="ChEBI" id="CHEBI:37565"/>
    </ligand>
</feature>
<protein>
    <recommendedName>
        <fullName evidence="1">GTP-dependent dephospho-CoA kinase</fullName>
        <ecNumber evidence="1">2.7.1.237</ecNumber>
    </recommendedName>
    <alternativeName>
        <fullName evidence="1">Dephospho-coenzyme A kinase</fullName>
        <shortName evidence="1">DPCK</shortName>
    </alternativeName>
</protein>
<keyword id="KW-0173">Coenzyme A biosynthesis</keyword>
<keyword id="KW-0342">GTP-binding</keyword>
<keyword id="KW-0418">Kinase</keyword>
<keyword id="KW-0547">Nucleotide-binding</keyword>
<keyword id="KW-1185">Reference proteome</keyword>
<keyword id="KW-0808">Transferase</keyword>
<accession>A3DMS6</accession>
<name>DPCKG_STAMF</name>
<proteinExistence type="inferred from homology"/>
<dbReference type="EC" id="2.7.1.237" evidence="1"/>
<dbReference type="EMBL" id="CP000575">
    <property type="protein sequence ID" value="ABN69936.1"/>
    <property type="molecule type" value="Genomic_DNA"/>
</dbReference>
<dbReference type="RefSeq" id="WP_011839127.1">
    <property type="nucleotide sequence ID" value="NC_009033.1"/>
</dbReference>
<dbReference type="SMR" id="A3DMS6"/>
<dbReference type="STRING" id="399550.Smar_0835"/>
<dbReference type="GeneID" id="4907568"/>
<dbReference type="KEGG" id="smr:Smar_0835"/>
<dbReference type="eggNOG" id="arCOG04076">
    <property type="taxonomic scope" value="Archaea"/>
</dbReference>
<dbReference type="HOGENOM" id="CLU_120795_1_0_2"/>
<dbReference type="OrthoDB" id="15447at2157"/>
<dbReference type="UniPathway" id="UPA00241"/>
<dbReference type="Proteomes" id="UP000000254">
    <property type="component" value="Chromosome"/>
</dbReference>
<dbReference type="GO" id="GO:0005525">
    <property type="term" value="F:GTP binding"/>
    <property type="evidence" value="ECO:0007669"/>
    <property type="project" value="UniProtKB-UniRule"/>
</dbReference>
<dbReference type="GO" id="GO:0016301">
    <property type="term" value="F:kinase activity"/>
    <property type="evidence" value="ECO:0007669"/>
    <property type="project" value="UniProtKB-UniRule"/>
</dbReference>
<dbReference type="GO" id="GO:0015937">
    <property type="term" value="P:coenzyme A biosynthetic process"/>
    <property type="evidence" value="ECO:0007669"/>
    <property type="project" value="UniProtKB-UniRule"/>
</dbReference>
<dbReference type="HAMAP" id="MF_00590">
    <property type="entry name" value="Dephospho_CoA_kinase_GTP_dep"/>
    <property type="match status" value="1"/>
</dbReference>
<dbReference type="InterPro" id="IPR007164">
    <property type="entry name" value="GTP-dep_dephospho-CoA_kin"/>
</dbReference>
<dbReference type="PANTHER" id="PTHR40732:SF1">
    <property type="entry name" value="GTP-DEPENDENT DEPHOSPHO-COA KINASE"/>
    <property type="match status" value="1"/>
</dbReference>
<dbReference type="PANTHER" id="PTHR40732">
    <property type="entry name" value="UPF0218 PROTEIN TK1697"/>
    <property type="match status" value="1"/>
</dbReference>
<dbReference type="Pfam" id="PF04019">
    <property type="entry name" value="DUF359"/>
    <property type="match status" value="1"/>
</dbReference>
<reference key="1">
    <citation type="journal article" date="2009" name="BMC Genomics">
        <title>The complete genome sequence of Staphylothermus marinus reveals differences in sulfur metabolism among heterotrophic Crenarchaeota.</title>
        <authorList>
            <person name="Anderson I.J."/>
            <person name="Dharmarajan L."/>
            <person name="Rodriguez J."/>
            <person name="Hooper S."/>
            <person name="Porat I."/>
            <person name="Ulrich L.E."/>
            <person name="Elkins J.G."/>
            <person name="Mavromatis K."/>
            <person name="Sun H."/>
            <person name="Land M."/>
            <person name="Lapidus A."/>
            <person name="Lucas S."/>
            <person name="Barry K."/>
            <person name="Huber H."/>
            <person name="Zhulin I.B."/>
            <person name="Whitman W.B."/>
            <person name="Mukhopadhyay B."/>
            <person name="Woese C."/>
            <person name="Bristow J."/>
            <person name="Kyrpides N."/>
        </authorList>
    </citation>
    <scope>NUCLEOTIDE SEQUENCE [LARGE SCALE GENOMIC DNA]</scope>
    <source>
        <strain>ATCC 43588 / DSM 3639 / JCM 9404 / F1</strain>
    </source>
</reference>
<reference key="2">
    <citation type="journal article" date="2009" name="Stand. Genomic Sci.">
        <title>Complete genome sequence of Staphylothermus marinus Stetter and Fiala 1986 type strain F1.</title>
        <authorList>
            <person name="Anderson I.J."/>
            <person name="Sun H."/>
            <person name="Lapidus A."/>
            <person name="Copeland A."/>
            <person name="Glavina Del Rio T."/>
            <person name="Tice H."/>
            <person name="Dalin E."/>
            <person name="Lucas S."/>
            <person name="Barry K."/>
            <person name="Land M."/>
            <person name="Richardson P."/>
            <person name="Huber H."/>
            <person name="Kyrpides N.C."/>
        </authorList>
    </citation>
    <scope>NUCLEOTIDE SEQUENCE [LARGE SCALE GENOMIC DNA]</scope>
    <source>
        <strain>ATCC 43588 / DSM 3639 / JCM 9404 / F1</strain>
    </source>
</reference>
<comment type="function">
    <text evidence="1">Catalyzes the GTP-dependent phosphorylation of the 3'-hydroxyl group of dephosphocoenzyme A to form coenzyme A (CoA).</text>
</comment>
<comment type="catalytic activity">
    <reaction evidence="1">
        <text>3'-dephospho-CoA + GTP = GDP + CoA + H(+)</text>
        <dbReference type="Rhea" id="RHEA:61156"/>
        <dbReference type="ChEBI" id="CHEBI:15378"/>
        <dbReference type="ChEBI" id="CHEBI:37565"/>
        <dbReference type="ChEBI" id="CHEBI:57287"/>
        <dbReference type="ChEBI" id="CHEBI:57328"/>
        <dbReference type="ChEBI" id="CHEBI:58189"/>
        <dbReference type="EC" id="2.7.1.237"/>
    </reaction>
</comment>
<comment type="pathway">
    <text evidence="1">Cofactor biosynthesis; coenzyme A biosynthesis.</text>
</comment>
<comment type="similarity">
    <text evidence="1">Belongs to the GTP-dependent DPCK family.</text>
</comment>
<evidence type="ECO:0000255" key="1">
    <source>
        <dbReference type="HAMAP-Rule" id="MF_00590"/>
    </source>
</evidence>
<sequence>MKSKFIVPVLKPESYLRKILSTPQGILYIGKYPIKDLEAHILVGDIVSNTLRGNIKIIDYKTRRHINIKPIINEPLTNLVNPRGTMSLMSRTIAKAKNYRTIIVKGEEDLVTLAYALENEETSIAYGQPDIGVVIIKSNRLKALRILKTFKPDIVVYNKV</sequence>
<organism>
    <name type="scientific">Staphylothermus marinus (strain ATCC 43588 / DSM 3639 / JCM 9404 / F1)</name>
    <dbReference type="NCBI Taxonomy" id="399550"/>
    <lineage>
        <taxon>Archaea</taxon>
        <taxon>Thermoproteota</taxon>
        <taxon>Thermoprotei</taxon>
        <taxon>Desulfurococcales</taxon>
        <taxon>Desulfurococcaceae</taxon>
        <taxon>Staphylothermus</taxon>
    </lineage>
</organism>
<gene>
    <name type="ordered locus">Smar_0835</name>
</gene>